<evidence type="ECO:0000255" key="1">
    <source>
        <dbReference type="HAMAP-Rule" id="MF_01042"/>
    </source>
</evidence>
<comment type="function">
    <text evidence="1">Acts as a ribosome collision sensor. Detects stalled/collided disomes (pairs of ribosomes where the leading ribosome is stalled and a second ribosome has collided with it) and endonucleolytically cleaves mRNA at the 5' boundary of the stalled ribosome. Stalled/collided disomes form a new interface (primarily via the 30S subunits) that binds SmrB. Cleaved mRNA becomes available for tmRNA ligation, leading to ribosomal subunit dissociation and rescue of stalled ribosomes.</text>
</comment>
<comment type="subunit">
    <text evidence="1">Associates with collided ribosomes, but not with correctly translating polysomes.</text>
</comment>
<comment type="similarity">
    <text evidence="1">Belongs to the SmrB family.</text>
</comment>
<dbReference type="EC" id="3.1.-.-" evidence="1"/>
<dbReference type="EMBL" id="CP000948">
    <property type="protein sequence ID" value="ACB03489.1"/>
    <property type="molecule type" value="Genomic_DNA"/>
</dbReference>
<dbReference type="RefSeq" id="WP_000730806.1">
    <property type="nucleotide sequence ID" value="NC_010473.1"/>
</dbReference>
<dbReference type="SMR" id="B1X9K4"/>
<dbReference type="GeneID" id="93774844"/>
<dbReference type="KEGG" id="ecd:ECDH10B_2493"/>
<dbReference type="HOGENOM" id="CLU_055978_4_0_6"/>
<dbReference type="GO" id="GO:0004521">
    <property type="term" value="F:RNA endonuclease activity"/>
    <property type="evidence" value="ECO:0007669"/>
    <property type="project" value="UniProtKB-UniRule"/>
</dbReference>
<dbReference type="GO" id="GO:0019843">
    <property type="term" value="F:rRNA binding"/>
    <property type="evidence" value="ECO:0007669"/>
    <property type="project" value="UniProtKB-UniRule"/>
</dbReference>
<dbReference type="GO" id="GO:0072344">
    <property type="term" value="P:rescue of stalled ribosome"/>
    <property type="evidence" value="ECO:0007669"/>
    <property type="project" value="UniProtKB-UniRule"/>
</dbReference>
<dbReference type="Gene3D" id="3.30.1370.110">
    <property type="match status" value="1"/>
</dbReference>
<dbReference type="HAMAP" id="MF_01042">
    <property type="entry name" value="SmrB"/>
    <property type="match status" value="1"/>
</dbReference>
<dbReference type="InterPro" id="IPR002625">
    <property type="entry name" value="Smr_dom"/>
</dbReference>
<dbReference type="InterPro" id="IPR036063">
    <property type="entry name" value="Smr_dom_sf"/>
</dbReference>
<dbReference type="InterPro" id="IPR022990">
    <property type="entry name" value="SmrB-like"/>
</dbReference>
<dbReference type="NCBIfam" id="NF003432">
    <property type="entry name" value="PRK04946.1"/>
    <property type="match status" value="1"/>
</dbReference>
<dbReference type="PANTHER" id="PTHR35562">
    <property type="entry name" value="DNA ENDONUCLEASE SMRA-RELATED"/>
    <property type="match status" value="1"/>
</dbReference>
<dbReference type="PANTHER" id="PTHR35562:SF1">
    <property type="entry name" value="UPF0115 PROTEIN YFCN"/>
    <property type="match status" value="1"/>
</dbReference>
<dbReference type="Pfam" id="PF01713">
    <property type="entry name" value="Smr"/>
    <property type="match status" value="1"/>
</dbReference>
<dbReference type="SMART" id="SM00463">
    <property type="entry name" value="SMR"/>
    <property type="match status" value="1"/>
</dbReference>
<dbReference type="SUPFAM" id="SSF160443">
    <property type="entry name" value="SMR domain-like"/>
    <property type="match status" value="1"/>
</dbReference>
<dbReference type="PROSITE" id="PS50828">
    <property type="entry name" value="SMR"/>
    <property type="match status" value="1"/>
</dbReference>
<reference key="1">
    <citation type="journal article" date="2008" name="J. Bacteriol.">
        <title>The complete genome sequence of Escherichia coli DH10B: insights into the biology of a laboratory workhorse.</title>
        <authorList>
            <person name="Durfee T."/>
            <person name="Nelson R."/>
            <person name="Baldwin S."/>
            <person name="Plunkett G. III"/>
            <person name="Burland V."/>
            <person name="Mau B."/>
            <person name="Petrosino J.F."/>
            <person name="Qin X."/>
            <person name="Muzny D.M."/>
            <person name="Ayele M."/>
            <person name="Gibbs R.A."/>
            <person name="Csorgo B."/>
            <person name="Posfai G."/>
            <person name="Weinstock G.M."/>
            <person name="Blattner F.R."/>
        </authorList>
    </citation>
    <scope>NUCLEOTIDE SEQUENCE [LARGE SCALE GENOMIC DNA]</scope>
    <source>
        <strain>K12 / DH10B</strain>
    </source>
</reference>
<feature type="chain" id="PRO_1000136039" description="Ribosome rescue factor SmrB">
    <location>
        <begin position="1"/>
        <end position="183"/>
    </location>
</feature>
<feature type="domain" description="Smr" evidence="1">
    <location>
        <begin position="98"/>
        <end position="173"/>
    </location>
</feature>
<sequence>MKKKTTLSEEDQALFRQLMAGTRKIKQDTIVHRPQRKKISEVPVKRLIQEQADASHYFSDEFQPLLNTEGPVKYVRPDVSHFEAKKLRRGDYSPELFLDLHGLTQLQAKQELGALIAACRREHVFCACVMHGHGKHILKQQTPLWLAQHPHVMAFHQAPKEYGGDAALLVLIEVEEWLPPELP</sequence>
<keyword id="KW-0255">Endonuclease</keyword>
<keyword id="KW-0378">Hydrolase</keyword>
<keyword id="KW-0540">Nuclease</keyword>
<keyword id="KW-0694">RNA-binding</keyword>
<keyword id="KW-0699">rRNA-binding</keyword>
<accession>B1X9K4</accession>
<organism>
    <name type="scientific">Escherichia coli (strain K12 / DH10B)</name>
    <dbReference type="NCBI Taxonomy" id="316385"/>
    <lineage>
        <taxon>Bacteria</taxon>
        <taxon>Pseudomonadati</taxon>
        <taxon>Pseudomonadota</taxon>
        <taxon>Gammaproteobacteria</taxon>
        <taxon>Enterobacterales</taxon>
        <taxon>Enterobacteriaceae</taxon>
        <taxon>Escherichia</taxon>
    </lineage>
</organism>
<name>SMRB_ECODH</name>
<protein>
    <recommendedName>
        <fullName evidence="1">Ribosome rescue factor SmrB</fullName>
        <ecNumber evidence="1">3.1.-.-</ecNumber>
    </recommendedName>
</protein>
<gene>
    <name evidence="1" type="primary">smrB</name>
    <name type="ordered locus">ECDH10B_2493</name>
</gene>
<proteinExistence type="inferred from homology"/>